<name>MINC_SHEB9</name>
<keyword id="KW-0131">Cell cycle</keyword>
<keyword id="KW-0132">Cell division</keyword>
<keyword id="KW-0717">Septation</keyword>
<protein>
    <recommendedName>
        <fullName evidence="1">Probable septum site-determining protein MinC</fullName>
    </recommendedName>
</protein>
<accession>A9KYY5</accession>
<dbReference type="EMBL" id="CP000891">
    <property type="protein sequence ID" value="ABX49073.1"/>
    <property type="molecule type" value="Genomic_DNA"/>
</dbReference>
<dbReference type="RefSeq" id="WP_006081363.1">
    <property type="nucleotide sequence ID" value="NC_009997.1"/>
</dbReference>
<dbReference type="SMR" id="A9KYY5"/>
<dbReference type="DNASU" id="5753645"/>
<dbReference type="GeneID" id="11772108"/>
<dbReference type="KEGG" id="sbn:Sbal195_1902"/>
<dbReference type="HOGENOM" id="CLU_067812_0_1_6"/>
<dbReference type="Proteomes" id="UP000000770">
    <property type="component" value="Chromosome"/>
</dbReference>
<dbReference type="GO" id="GO:0000902">
    <property type="term" value="P:cell morphogenesis"/>
    <property type="evidence" value="ECO:0007669"/>
    <property type="project" value="InterPro"/>
</dbReference>
<dbReference type="GO" id="GO:0000917">
    <property type="term" value="P:division septum assembly"/>
    <property type="evidence" value="ECO:0007669"/>
    <property type="project" value="UniProtKB-KW"/>
</dbReference>
<dbReference type="GO" id="GO:0051302">
    <property type="term" value="P:regulation of cell division"/>
    <property type="evidence" value="ECO:0007669"/>
    <property type="project" value="InterPro"/>
</dbReference>
<dbReference type="GO" id="GO:1901891">
    <property type="term" value="P:regulation of cell septum assembly"/>
    <property type="evidence" value="ECO:0007669"/>
    <property type="project" value="InterPro"/>
</dbReference>
<dbReference type="Gene3D" id="2.160.20.70">
    <property type="match status" value="1"/>
</dbReference>
<dbReference type="Gene3D" id="3.30.70.260">
    <property type="match status" value="1"/>
</dbReference>
<dbReference type="HAMAP" id="MF_00267">
    <property type="entry name" value="MinC"/>
    <property type="match status" value="1"/>
</dbReference>
<dbReference type="InterPro" id="IPR016098">
    <property type="entry name" value="CAP/MinC_C"/>
</dbReference>
<dbReference type="InterPro" id="IPR013033">
    <property type="entry name" value="MinC"/>
</dbReference>
<dbReference type="InterPro" id="IPR036145">
    <property type="entry name" value="MinC_C_sf"/>
</dbReference>
<dbReference type="InterPro" id="IPR007874">
    <property type="entry name" value="MinC_N"/>
</dbReference>
<dbReference type="InterPro" id="IPR005526">
    <property type="entry name" value="Septum_form_inhib_MinC_C"/>
</dbReference>
<dbReference type="NCBIfam" id="TIGR01222">
    <property type="entry name" value="minC"/>
    <property type="match status" value="1"/>
</dbReference>
<dbReference type="PANTHER" id="PTHR34108">
    <property type="entry name" value="SEPTUM SITE-DETERMINING PROTEIN MINC"/>
    <property type="match status" value="1"/>
</dbReference>
<dbReference type="PANTHER" id="PTHR34108:SF1">
    <property type="entry name" value="SEPTUM SITE-DETERMINING PROTEIN MINC"/>
    <property type="match status" value="1"/>
</dbReference>
<dbReference type="Pfam" id="PF03775">
    <property type="entry name" value="MinC_C"/>
    <property type="match status" value="1"/>
</dbReference>
<dbReference type="Pfam" id="PF05209">
    <property type="entry name" value="MinC_N"/>
    <property type="match status" value="1"/>
</dbReference>
<dbReference type="SUPFAM" id="SSF63848">
    <property type="entry name" value="Cell-division inhibitor MinC, C-terminal domain"/>
    <property type="match status" value="1"/>
</dbReference>
<organism>
    <name type="scientific">Shewanella baltica (strain OS195)</name>
    <dbReference type="NCBI Taxonomy" id="399599"/>
    <lineage>
        <taxon>Bacteria</taxon>
        <taxon>Pseudomonadati</taxon>
        <taxon>Pseudomonadota</taxon>
        <taxon>Gammaproteobacteria</taxon>
        <taxon>Alteromonadales</taxon>
        <taxon>Shewanellaceae</taxon>
        <taxon>Shewanella</taxon>
    </lineage>
</organism>
<evidence type="ECO:0000255" key="1">
    <source>
        <dbReference type="HAMAP-Rule" id="MF_00267"/>
    </source>
</evidence>
<comment type="function">
    <text evidence="1">Cell division inhibitor that blocks the formation of polar Z ring septums. Rapidly oscillates between the poles of the cell to destabilize FtsZ filaments that have formed before they mature into polar Z rings. Prevents FtsZ polymerization.</text>
</comment>
<comment type="subunit">
    <text evidence="1">Interacts with MinD and FtsZ.</text>
</comment>
<comment type="similarity">
    <text evidence="1">Belongs to the MinC family.</text>
</comment>
<sequence>MSKPSLELKGASFTLSVLHINSSDLQAVMTELDSKLAQAPQFFLGAPLVVNLSAIQHDSLNLSALKDLLISRQLVIVGITGATTVLSKQAKDLGLAIVKAGKQSSTPPPAPRQTKIVKQNIRSGQQVYAKNGDLIIFGAVGNGAEVIADGSIHIYGALRGKAMAGAAGDTSAVIIAHSLEAELVSIAGQYWLAENLQQHSSDKSGCIRLDGESLMVESLPL</sequence>
<gene>
    <name evidence="1" type="primary">minC</name>
    <name type="ordered locus">Sbal195_1902</name>
</gene>
<feature type="chain" id="PRO_1000078656" description="Probable septum site-determining protein MinC">
    <location>
        <begin position="1"/>
        <end position="221"/>
    </location>
</feature>
<reference key="1">
    <citation type="submission" date="2007-11" db="EMBL/GenBank/DDBJ databases">
        <title>Complete sequence of chromosome of Shewanella baltica OS195.</title>
        <authorList>
            <consortium name="US DOE Joint Genome Institute"/>
            <person name="Copeland A."/>
            <person name="Lucas S."/>
            <person name="Lapidus A."/>
            <person name="Barry K."/>
            <person name="Glavina del Rio T."/>
            <person name="Dalin E."/>
            <person name="Tice H."/>
            <person name="Pitluck S."/>
            <person name="Chain P."/>
            <person name="Malfatti S."/>
            <person name="Shin M."/>
            <person name="Vergez L."/>
            <person name="Schmutz J."/>
            <person name="Larimer F."/>
            <person name="Land M."/>
            <person name="Hauser L."/>
            <person name="Kyrpides N."/>
            <person name="Kim E."/>
            <person name="Brettar I."/>
            <person name="Rodrigues J."/>
            <person name="Konstantinidis K."/>
            <person name="Klappenbach J."/>
            <person name="Hofle M."/>
            <person name="Tiedje J."/>
            <person name="Richardson P."/>
        </authorList>
    </citation>
    <scope>NUCLEOTIDE SEQUENCE [LARGE SCALE GENOMIC DNA]</scope>
    <source>
        <strain>OS195</strain>
    </source>
</reference>
<proteinExistence type="inferred from homology"/>